<sequence>MKQLMMIGFGAMASEVYAHLPQDLELKWIVVPERSVESVKQKVDRHIQVISDINQCDGAPDYVIEVAGQAAVKEHAKNVLAHGWNIGLISVGTLADSEFFTELQQTAEQNGAHLHLLAGAIAGIDGIAAAKEGGLEKVTYKGCKSPNSWRGSYAEQLIDLDQVHTVTMFYRGTAREAAQKFPANANVAATIALAGVGMDNTIVELTVDPDTTQNKHTIVAEGRFGQMTIEMVGVPLASNPKTSTLAALSVIRACRNSVEAIQI</sequence>
<dbReference type="EC" id="1.4.1.21" evidence="1"/>
<dbReference type="EMBL" id="CR543861">
    <property type="protein sequence ID" value="CAG67888.1"/>
    <property type="molecule type" value="Genomic_DNA"/>
</dbReference>
<dbReference type="RefSeq" id="WP_011182192.1">
    <property type="nucleotide sequence ID" value="NC_005966.1"/>
</dbReference>
<dbReference type="SMR" id="Q6FDH0"/>
<dbReference type="STRING" id="202950.GCA_001485005_01364"/>
<dbReference type="GeneID" id="45233443"/>
<dbReference type="KEGG" id="aci:ACIAD0997"/>
<dbReference type="eggNOG" id="COG1712">
    <property type="taxonomic scope" value="Bacteria"/>
</dbReference>
<dbReference type="HOGENOM" id="CLU_089550_0_0_6"/>
<dbReference type="OrthoDB" id="7056904at2"/>
<dbReference type="BioCyc" id="ASP62977:ACIAD_RS04590-MONOMER"/>
<dbReference type="UniPathway" id="UPA00253">
    <property type="reaction ID" value="UER00456"/>
</dbReference>
<dbReference type="Proteomes" id="UP000000430">
    <property type="component" value="Chromosome"/>
</dbReference>
<dbReference type="GO" id="GO:0033735">
    <property type="term" value="F:aspartate dehydrogenase activity"/>
    <property type="evidence" value="ECO:0007669"/>
    <property type="project" value="UniProtKB-EC"/>
</dbReference>
<dbReference type="GO" id="GO:0051287">
    <property type="term" value="F:NAD binding"/>
    <property type="evidence" value="ECO:0007669"/>
    <property type="project" value="UniProtKB-UniRule"/>
</dbReference>
<dbReference type="GO" id="GO:0050661">
    <property type="term" value="F:NADP binding"/>
    <property type="evidence" value="ECO:0007669"/>
    <property type="project" value="UniProtKB-UniRule"/>
</dbReference>
<dbReference type="GO" id="GO:0016639">
    <property type="term" value="F:oxidoreductase activity, acting on the CH-NH2 group of donors, NAD or NADP as acceptor"/>
    <property type="evidence" value="ECO:0007669"/>
    <property type="project" value="UniProtKB-UniRule"/>
</dbReference>
<dbReference type="GO" id="GO:0009435">
    <property type="term" value="P:NAD biosynthetic process"/>
    <property type="evidence" value="ECO:0007669"/>
    <property type="project" value="UniProtKB-UniRule"/>
</dbReference>
<dbReference type="Gene3D" id="3.30.360.10">
    <property type="entry name" value="Dihydrodipicolinate Reductase, domain 2"/>
    <property type="match status" value="1"/>
</dbReference>
<dbReference type="Gene3D" id="3.40.50.720">
    <property type="entry name" value="NAD(P)-binding Rossmann-like Domain"/>
    <property type="match status" value="1"/>
</dbReference>
<dbReference type="HAMAP" id="MF_01265">
    <property type="entry name" value="NadX"/>
    <property type="match status" value="1"/>
</dbReference>
<dbReference type="InterPro" id="IPR005106">
    <property type="entry name" value="Asp/hSer_DH_NAD-bd"/>
</dbReference>
<dbReference type="InterPro" id="IPR002811">
    <property type="entry name" value="Asp_DH"/>
</dbReference>
<dbReference type="InterPro" id="IPR020626">
    <property type="entry name" value="Asp_DH_prok"/>
</dbReference>
<dbReference type="InterPro" id="IPR011182">
    <property type="entry name" value="L-Asp_DH"/>
</dbReference>
<dbReference type="InterPro" id="IPR036291">
    <property type="entry name" value="NAD(P)-bd_dom_sf"/>
</dbReference>
<dbReference type="NCBIfam" id="NF009827">
    <property type="entry name" value="PRK13303.1-2"/>
    <property type="match status" value="1"/>
</dbReference>
<dbReference type="NCBIfam" id="NF009828">
    <property type="entry name" value="PRK13303.1-3"/>
    <property type="match status" value="1"/>
</dbReference>
<dbReference type="PANTHER" id="PTHR31873:SF6">
    <property type="entry name" value="ASPARTATE DEHYDROGENASE DOMAIN-CONTAINING PROTEIN"/>
    <property type="match status" value="1"/>
</dbReference>
<dbReference type="PANTHER" id="PTHR31873">
    <property type="entry name" value="L-ASPARTATE DEHYDROGENASE-RELATED"/>
    <property type="match status" value="1"/>
</dbReference>
<dbReference type="Pfam" id="PF01958">
    <property type="entry name" value="Asp_DH_C"/>
    <property type="match status" value="1"/>
</dbReference>
<dbReference type="Pfam" id="PF03447">
    <property type="entry name" value="NAD_binding_3"/>
    <property type="match status" value="1"/>
</dbReference>
<dbReference type="PIRSF" id="PIRSF005227">
    <property type="entry name" value="Asp_dh_NAD_syn"/>
    <property type="match status" value="1"/>
</dbReference>
<dbReference type="SUPFAM" id="SSF55347">
    <property type="entry name" value="Glyceraldehyde-3-phosphate dehydrogenase-like, C-terminal domain"/>
    <property type="match status" value="1"/>
</dbReference>
<dbReference type="SUPFAM" id="SSF51735">
    <property type="entry name" value="NAD(P)-binding Rossmann-fold domains"/>
    <property type="match status" value="1"/>
</dbReference>
<reference key="1">
    <citation type="journal article" date="2004" name="Nucleic Acids Res.">
        <title>Unique features revealed by the genome sequence of Acinetobacter sp. ADP1, a versatile and naturally transformation competent bacterium.</title>
        <authorList>
            <person name="Barbe V."/>
            <person name="Vallenet D."/>
            <person name="Fonknechten N."/>
            <person name="Kreimeyer A."/>
            <person name="Oztas S."/>
            <person name="Labarre L."/>
            <person name="Cruveiller S."/>
            <person name="Robert C."/>
            <person name="Duprat S."/>
            <person name="Wincker P."/>
            <person name="Ornston L.N."/>
            <person name="Weissenbach J."/>
            <person name="Marliere P."/>
            <person name="Cohen G.N."/>
            <person name="Medigue C."/>
        </authorList>
    </citation>
    <scope>NUCLEOTIDE SEQUENCE [LARGE SCALE GENOMIC DNA]</scope>
    <source>
        <strain>ATCC 33305 / BD413 / ADP1</strain>
    </source>
</reference>
<comment type="function">
    <text evidence="1">Specifically catalyzes the NAD or NADP-dependent dehydrogenation of L-aspartate to iminoaspartate.</text>
</comment>
<comment type="catalytic activity">
    <reaction evidence="1">
        <text>L-aspartate + NADP(+) + H2O = oxaloacetate + NH4(+) + NADPH + H(+)</text>
        <dbReference type="Rhea" id="RHEA:11784"/>
        <dbReference type="ChEBI" id="CHEBI:15377"/>
        <dbReference type="ChEBI" id="CHEBI:15378"/>
        <dbReference type="ChEBI" id="CHEBI:16452"/>
        <dbReference type="ChEBI" id="CHEBI:28938"/>
        <dbReference type="ChEBI" id="CHEBI:29991"/>
        <dbReference type="ChEBI" id="CHEBI:57783"/>
        <dbReference type="ChEBI" id="CHEBI:58349"/>
        <dbReference type="EC" id="1.4.1.21"/>
    </reaction>
</comment>
<comment type="catalytic activity">
    <reaction evidence="1">
        <text>L-aspartate + NAD(+) + H2O = oxaloacetate + NH4(+) + NADH + H(+)</text>
        <dbReference type="Rhea" id="RHEA:11788"/>
        <dbReference type="ChEBI" id="CHEBI:15377"/>
        <dbReference type="ChEBI" id="CHEBI:15378"/>
        <dbReference type="ChEBI" id="CHEBI:16452"/>
        <dbReference type="ChEBI" id="CHEBI:28938"/>
        <dbReference type="ChEBI" id="CHEBI:29991"/>
        <dbReference type="ChEBI" id="CHEBI:57540"/>
        <dbReference type="ChEBI" id="CHEBI:57945"/>
        <dbReference type="EC" id="1.4.1.21"/>
    </reaction>
</comment>
<comment type="pathway">
    <text evidence="1">Cofactor biosynthesis; NAD(+) biosynthesis; iminoaspartate from L-aspartate (dehydrogenase route): step 1/1.</text>
</comment>
<comment type="miscellaneous">
    <text evidence="1">The iminoaspartate product is unstable in aqueous solution and can decompose to oxaloacetate and ammonia.</text>
</comment>
<comment type="similarity">
    <text evidence="1">Belongs to the L-aspartate dehydrogenase family.</text>
</comment>
<keyword id="KW-0520">NAD</keyword>
<keyword id="KW-0521">NADP</keyword>
<keyword id="KW-0560">Oxidoreductase</keyword>
<keyword id="KW-0662">Pyridine nucleotide biosynthesis</keyword>
<protein>
    <recommendedName>
        <fullName evidence="1">L-aspartate dehydrogenase</fullName>
        <ecNumber evidence="1">1.4.1.21</ecNumber>
    </recommendedName>
</protein>
<organism>
    <name type="scientific">Acinetobacter baylyi (strain ATCC 33305 / BD413 / ADP1)</name>
    <dbReference type="NCBI Taxonomy" id="62977"/>
    <lineage>
        <taxon>Bacteria</taxon>
        <taxon>Pseudomonadati</taxon>
        <taxon>Pseudomonadota</taxon>
        <taxon>Gammaproteobacteria</taxon>
        <taxon>Moraxellales</taxon>
        <taxon>Moraxellaceae</taxon>
        <taxon>Acinetobacter</taxon>
    </lineage>
</organism>
<gene>
    <name evidence="1" type="primary">nadX</name>
    <name type="ordered locus">ACIAD0997</name>
</gene>
<evidence type="ECO:0000255" key="1">
    <source>
        <dbReference type="HAMAP-Rule" id="MF_01265"/>
    </source>
</evidence>
<accession>Q6FDH0</accession>
<proteinExistence type="inferred from homology"/>
<name>ASPD_ACIAD</name>
<feature type="chain" id="PRO_0000144879" description="L-aspartate dehydrogenase">
    <location>
        <begin position="1"/>
        <end position="263"/>
    </location>
</feature>
<feature type="active site" evidence="1">
    <location>
        <position position="216"/>
    </location>
</feature>
<feature type="binding site" evidence="1">
    <location>
        <position position="120"/>
    </location>
    <ligand>
        <name>NAD(+)</name>
        <dbReference type="ChEBI" id="CHEBI:57540"/>
    </ligand>
</feature>
<feature type="binding site" evidence="1">
    <location>
        <position position="186"/>
    </location>
    <ligand>
        <name>NAD(+)</name>
        <dbReference type="ChEBI" id="CHEBI:57540"/>
    </ligand>
</feature>